<keyword id="KW-0539">Nucleus</keyword>
<keyword id="KW-1185">Reference proteome</keyword>
<sequence length="109" mass="11856">MSNSAPARQYLNEKVTPVLLEGMKILARDRPENPLQFLGQFLLDANANQQKQKEIVNQPEPQQETPKADADMSTPTMAEQVQTSFSNPASTPLTQTSSPSSNPGKNSAS</sequence>
<proteinExistence type="inferred from homology"/>
<comment type="function">
    <text evidence="2">The COMPASS (Set1C) complex specifically mono-, di- and trimethylates histone H3 to form H3K4me1/2/3, which subsequently activates gene expression by regulating transcription elongation and plays a role in telomere length maintenance.</text>
</comment>
<comment type="subunit">
    <text>Component of the COMPASS (Set1C) complex composed of ash2, sdc1, set1, shg1, spp1, swd1, swd2 and swd3. Component of the Lid2 complex composed of ash2, jmj3, lid2, sdc1 and snt2.</text>
</comment>
<comment type="subcellular location">
    <subcellularLocation>
        <location evidence="3">Nucleus</location>
    </subcellularLocation>
</comment>
<comment type="similarity">
    <text evidence="4">Belongs to the dpy-30 family.</text>
</comment>
<dbReference type="EMBL" id="CU329672">
    <property type="protein sequence ID" value="CAA21425.1"/>
    <property type="molecule type" value="Genomic_DNA"/>
</dbReference>
<dbReference type="PIR" id="T41154">
    <property type="entry name" value="T41154"/>
</dbReference>
<dbReference type="RefSeq" id="NP_588390.1">
    <property type="nucleotide sequence ID" value="NM_001023381.2"/>
</dbReference>
<dbReference type="SMR" id="O74861"/>
<dbReference type="BioGRID" id="275717">
    <property type="interactions" value="131"/>
</dbReference>
<dbReference type="ComplexPortal" id="CPX-10325">
    <property type="entry name" value="COMPASS complex"/>
</dbReference>
<dbReference type="STRING" id="284812.O74861"/>
<dbReference type="iPTMnet" id="O74861"/>
<dbReference type="PaxDb" id="4896-SPCC18.11c.1"/>
<dbReference type="EnsemblFungi" id="SPCC18.11c.1">
    <property type="protein sequence ID" value="SPCC18.11c.1:pep"/>
    <property type="gene ID" value="SPCC18.11c"/>
</dbReference>
<dbReference type="GeneID" id="2539145"/>
<dbReference type="KEGG" id="spo:2539145"/>
<dbReference type="PomBase" id="SPCC18.11c">
    <property type="gene designation" value="sdc1"/>
</dbReference>
<dbReference type="VEuPathDB" id="FungiDB:SPCC18.11c"/>
<dbReference type="eggNOG" id="KOG4109">
    <property type="taxonomic scope" value="Eukaryota"/>
</dbReference>
<dbReference type="HOGENOM" id="CLU_2224732_0_0_1"/>
<dbReference type="InParanoid" id="O74861"/>
<dbReference type="PhylomeDB" id="O74861"/>
<dbReference type="PRO" id="PR:O74861"/>
<dbReference type="Proteomes" id="UP000002485">
    <property type="component" value="Chromosome III"/>
</dbReference>
<dbReference type="GO" id="GO:0000785">
    <property type="term" value="C:chromatin"/>
    <property type="evidence" value="ECO:0000305"/>
    <property type="project" value="PomBase"/>
</dbReference>
<dbReference type="GO" id="GO:0005829">
    <property type="term" value="C:cytosol"/>
    <property type="evidence" value="ECO:0007005"/>
    <property type="project" value="PomBase"/>
</dbReference>
<dbReference type="GO" id="GO:0048189">
    <property type="term" value="C:Lid2 complex"/>
    <property type="evidence" value="ECO:0000314"/>
    <property type="project" value="PomBase"/>
</dbReference>
<dbReference type="GO" id="GO:0005634">
    <property type="term" value="C:nucleus"/>
    <property type="evidence" value="ECO:0007005"/>
    <property type="project" value="PomBase"/>
</dbReference>
<dbReference type="GO" id="GO:0048188">
    <property type="term" value="C:Set1C/COMPASS complex"/>
    <property type="evidence" value="ECO:0000314"/>
    <property type="project" value="PomBase"/>
</dbReference>
<dbReference type="GO" id="GO:0045815">
    <property type="term" value="P:transcription initiation-coupled chromatin remodeling"/>
    <property type="evidence" value="ECO:0000305"/>
    <property type="project" value="PomBase"/>
</dbReference>
<dbReference type="CDD" id="cd22965">
    <property type="entry name" value="DD_DPY30_SDC1"/>
    <property type="match status" value="1"/>
</dbReference>
<dbReference type="Gene3D" id="1.20.890.10">
    <property type="entry name" value="cAMP-dependent protein kinase regulatory subunit, dimerization-anchoring domain"/>
    <property type="match status" value="1"/>
</dbReference>
<dbReference type="InterPro" id="IPR007858">
    <property type="entry name" value="Dpy-30_motif"/>
</dbReference>
<dbReference type="InterPro" id="IPR049629">
    <property type="entry name" value="DPY30_SDC1_DD"/>
</dbReference>
<dbReference type="Pfam" id="PF05186">
    <property type="entry name" value="Dpy-30"/>
    <property type="match status" value="1"/>
</dbReference>
<feature type="chain" id="PRO_0000114685" description="Set1 complex component sdc1">
    <location>
        <begin position="1"/>
        <end position="109"/>
    </location>
</feature>
<feature type="region of interest" description="Disordered" evidence="1">
    <location>
        <begin position="49"/>
        <end position="109"/>
    </location>
</feature>
<feature type="compositionally biased region" description="Polar residues" evidence="1">
    <location>
        <begin position="73"/>
        <end position="87"/>
    </location>
</feature>
<feature type="compositionally biased region" description="Low complexity" evidence="1">
    <location>
        <begin position="88"/>
        <end position="101"/>
    </location>
</feature>
<reference evidence="5" key="1">
    <citation type="journal article" date="2002" name="Nature">
        <title>The genome sequence of Schizosaccharomyces pombe.</title>
        <authorList>
            <person name="Wood V."/>
            <person name="Gwilliam R."/>
            <person name="Rajandream M.A."/>
            <person name="Lyne M.H."/>
            <person name="Lyne R."/>
            <person name="Stewart A."/>
            <person name="Sgouros J.G."/>
            <person name="Peat N."/>
            <person name="Hayles J."/>
            <person name="Baker S.G."/>
            <person name="Basham D."/>
            <person name="Bowman S."/>
            <person name="Brooks K."/>
            <person name="Brown D."/>
            <person name="Brown S."/>
            <person name="Chillingworth T."/>
            <person name="Churcher C.M."/>
            <person name="Collins M."/>
            <person name="Connor R."/>
            <person name="Cronin A."/>
            <person name="Davis P."/>
            <person name="Feltwell T."/>
            <person name="Fraser A."/>
            <person name="Gentles S."/>
            <person name="Goble A."/>
            <person name="Hamlin N."/>
            <person name="Harris D.E."/>
            <person name="Hidalgo J."/>
            <person name="Hodgson G."/>
            <person name="Holroyd S."/>
            <person name="Hornsby T."/>
            <person name="Howarth S."/>
            <person name="Huckle E.J."/>
            <person name="Hunt S."/>
            <person name="Jagels K."/>
            <person name="James K.D."/>
            <person name="Jones L."/>
            <person name="Jones M."/>
            <person name="Leather S."/>
            <person name="McDonald S."/>
            <person name="McLean J."/>
            <person name="Mooney P."/>
            <person name="Moule S."/>
            <person name="Mungall K.L."/>
            <person name="Murphy L.D."/>
            <person name="Niblett D."/>
            <person name="Odell C."/>
            <person name="Oliver K."/>
            <person name="O'Neil S."/>
            <person name="Pearson D."/>
            <person name="Quail M.A."/>
            <person name="Rabbinowitsch E."/>
            <person name="Rutherford K.M."/>
            <person name="Rutter S."/>
            <person name="Saunders D."/>
            <person name="Seeger K."/>
            <person name="Sharp S."/>
            <person name="Skelton J."/>
            <person name="Simmonds M.N."/>
            <person name="Squares R."/>
            <person name="Squares S."/>
            <person name="Stevens K."/>
            <person name="Taylor K."/>
            <person name="Taylor R.G."/>
            <person name="Tivey A."/>
            <person name="Walsh S.V."/>
            <person name="Warren T."/>
            <person name="Whitehead S."/>
            <person name="Woodward J.R."/>
            <person name="Volckaert G."/>
            <person name="Aert R."/>
            <person name="Robben J."/>
            <person name="Grymonprez B."/>
            <person name="Weltjens I."/>
            <person name="Vanstreels E."/>
            <person name="Rieger M."/>
            <person name="Schaefer M."/>
            <person name="Mueller-Auer S."/>
            <person name="Gabel C."/>
            <person name="Fuchs M."/>
            <person name="Duesterhoeft A."/>
            <person name="Fritzc C."/>
            <person name="Holzer E."/>
            <person name="Moestl D."/>
            <person name="Hilbert H."/>
            <person name="Borzym K."/>
            <person name="Langer I."/>
            <person name="Beck A."/>
            <person name="Lehrach H."/>
            <person name="Reinhardt R."/>
            <person name="Pohl T.M."/>
            <person name="Eger P."/>
            <person name="Zimmermann W."/>
            <person name="Wedler H."/>
            <person name="Wambutt R."/>
            <person name="Purnelle B."/>
            <person name="Goffeau A."/>
            <person name="Cadieu E."/>
            <person name="Dreano S."/>
            <person name="Gloux S."/>
            <person name="Lelaure V."/>
            <person name="Mottier S."/>
            <person name="Galibert F."/>
            <person name="Aves S.J."/>
            <person name="Xiang Z."/>
            <person name="Hunt C."/>
            <person name="Moore K."/>
            <person name="Hurst S.M."/>
            <person name="Lucas M."/>
            <person name="Rochet M."/>
            <person name="Gaillardin C."/>
            <person name="Tallada V.A."/>
            <person name="Garzon A."/>
            <person name="Thode G."/>
            <person name="Daga R.R."/>
            <person name="Cruzado L."/>
            <person name="Jimenez J."/>
            <person name="Sanchez M."/>
            <person name="del Rey F."/>
            <person name="Benito J."/>
            <person name="Dominguez A."/>
            <person name="Revuelta J.L."/>
            <person name="Moreno S."/>
            <person name="Armstrong J."/>
            <person name="Forsburg S.L."/>
            <person name="Cerutti L."/>
            <person name="Lowe T."/>
            <person name="McCombie W.R."/>
            <person name="Paulsen I."/>
            <person name="Potashkin J."/>
            <person name="Shpakovski G.V."/>
            <person name="Ussery D."/>
            <person name="Barrell B.G."/>
            <person name="Nurse P."/>
        </authorList>
    </citation>
    <scope>NUCLEOTIDE SEQUENCE [LARGE SCALE GENOMIC DNA]</scope>
    <source>
        <strain>972 / ATCC 24843</strain>
    </source>
</reference>
<reference evidence="4" key="2">
    <citation type="journal article" date="2003" name="J. Biol. Chem.">
        <title>High conservation of the Set1/Rad6 axis of histone 3 lysine 4 methylation in budding and fission yeasts.</title>
        <authorList>
            <person name="Roguev A."/>
            <person name="Schaft D."/>
            <person name="Shevchenko A."/>
            <person name="Aasland R."/>
            <person name="Shevchenko A."/>
            <person name="Stewart A.F."/>
        </authorList>
    </citation>
    <scope>FUNCTION OF THE SET1 COMPLEX</scope>
    <scope>COMPOSITION OF THE SET1 AND LID2 COMPLEXES</scope>
</reference>
<reference evidence="4" key="3">
    <citation type="journal article" date="2004" name="Mol. Cell. Proteomics">
        <title>A comparative analysis of an orthologous proteomic environment in the yeasts Saccharomyces cerevisiae and Schizosaccharomyces pombe.</title>
        <authorList>
            <person name="Roguev A."/>
            <person name="Shevchenko A."/>
            <person name="Schaft D."/>
            <person name="Thomas H."/>
            <person name="Stewart A.F."/>
            <person name="Shevchenko A."/>
        </authorList>
    </citation>
    <scope>COMPOSITION OF THE SET1 AND LID2 COMPLEXES</scope>
</reference>
<reference key="4">
    <citation type="journal article" date="2006" name="Nat. Biotechnol.">
        <title>ORFeome cloning and global analysis of protein localization in the fission yeast Schizosaccharomyces pombe.</title>
        <authorList>
            <person name="Matsuyama A."/>
            <person name="Arai R."/>
            <person name="Yashiroda Y."/>
            <person name="Shirai A."/>
            <person name="Kamata A."/>
            <person name="Sekido S."/>
            <person name="Kobayashi Y."/>
            <person name="Hashimoto A."/>
            <person name="Hamamoto M."/>
            <person name="Hiraoka Y."/>
            <person name="Horinouchi S."/>
            <person name="Yoshida M."/>
        </authorList>
    </citation>
    <scope>SUBCELLULAR LOCATION [LARGE SCALE ANALYSIS]</scope>
</reference>
<protein>
    <recommendedName>
        <fullName>Set1 complex component sdc1</fullName>
        <shortName>Set1C component sdc1</shortName>
    </recommendedName>
    <alternativeName>
        <fullName>COMPASS component sdc1</fullName>
    </alternativeName>
    <alternativeName>
        <fullName>Complex proteins associated with set1 protein sdc1</fullName>
    </alternativeName>
    <alternativeName>
        <fullName>Lid2 complex component sdc1</fullName>
        <shortName>Lid2C component sdc1</shortName>
    </alternativeName>
</protein>
<name>SDC1_SCHPO</name>
<organism>
    <name type="scientific">Schizosaccharomyces pombe (strain 972 / ATCC 24843)</name>
    <name type="common">Fission yeast</name>
    <dbReference type="NCBI Taxonomy" id="284812"/>
    <lineage>
        <taxon>Eukaryota</taxon>
        <taxon>Fungi</taxon>
        <taxon>Dikarya</taxon>
        <taxon>Ascomycota</taxon>
        <taxon>Taphrinomycotina</taxon>
        <taxon>Schizosaccharomycetes</taxon>
        <taxon>Schizosaccharomycetales</taxon>
        <taxon>Schizosaccharomycetaceae</taxon>
        <taxon>Schizosaccharomyces</taxon>
    </lineage>
</organism>
<gene>
    <name type="primary">sdc1</name>
    <name type="ORF">SPCC18.11c</name>
</gene>
<evidence type="ECO:0000256" key="1">
    <source>
        <dbReference type="SAM" id="MobiDB-lite"/>
    </source>
</evidence>
<evidence type="ECO:0000269" key="2">
    <source>
    </source>
</evidence>
<evidence type="ECO:0000269" key="3">
    <source>
    </source>
</evidence>
<evidence type="ECO:0000305" key="4"/>
<evidence type="ECO:0000312" key="5">
    <source>
        <dbReference type="EMBL" id="CAA21425.1"/>
    </source>
</evidence>
<accession>O74861</accession>